<accession>A1V4X2</accession>
<reference key="1">
    <citation type="journal article" date="2010" name="Genome Biol. Evol.">
        <title>Continuing evolution of Burkholderia mallei through genome reduction and large-scale rearrangements.</title>
        <authorList>
            <person name="Losada L."/>
            <person name="Ronning C.M."/>
            <person name="DeShazer D."/>
            <person name="Woods D."/>
            <person name="Fedorova N."/>
            <person name="Kim H.S."/>
            <person name="Shabalina S.A."/>
            <person name="Pearson T.R."/>
            <person name="Brinkac L."/>
            <person name="Tan P."/>
            <person name="Nandi T."/>
            <person name="Crabtree J."/>
            <person name="Badger J."/>
            <person name="Beckstrom-Sternberg S."/>
            <person name="Saqib M."/>
            <person name="Schutzer S.E."/>
            <person name="Keim P."/>
            <person name="Nierman W.C."/>
        </authorList>
    </citation>
    <scope>NUCLEOTIDE SEQUENCE [LARGE SCALE GENOMIC DNA]</scope>
    <source>
        <strain>SAVP1</strain>
    </source>
</reference>
<organism>
    <name type="scientific">Burkholderia mallei (strain SAVP1)</name>
    <dbReference type="NCBI Taxonomy" id="320388"/>
    <lineage>
        <taxon>Bacteria</taxon>
        <taxon>Pseudomonadati</taxon>
        <taxon>Pseudomonadota</taxon>
        <taxon>Betaproteobacteria</taxon>
        <taxon>Burkholderiales</taxon>
        <taxon>Burkholderiaceae</taxon>
        <taxon>Burkholderia</taxon>
        <taxon>pseudomallei group</taxon>
    </lineage>
</organism>
<dbReference type="EC" id="5.2.1.8" evidence="1"/>
<dbReference type="EMBL" id="CP000526">
    <property type="protein sequence ID" value="ABM49824.1"/>
    <property type="molecule type" value="Genomic_DNA"/>
</dbReference>
<dbReference type="RefSeq" id="WP_004193941.1">
    <property type="nucleotide sequence ID" value="NC_008785.1"/>
</dbReference>
<dbReference type="SMR" id="A1V4X2"/>
<dbReference type="GeneID" id="92979197"/>
<dbReference type="KEGG" id="bmv:BMASAVP1_A1958"/>
<dbReference type="HOGENOM" id="CLU_033058_2_0_4"/>
<dbReference type="GO" id="GO:0005737">
    <property type="term" value="C:cytoplasm"/>
    <property type="evidence" value="ECO:0007669"/>
    <property type="project" value="UniProtKB-SubCell"/>
</dbReference>
<dbReference type="GO" id="GO:0003755">
    <property type="term" value="F:peptidyl-prolyl cis-trans isomerase activity"/>
    <property type="evidence" value="ECO:0007669"/>
    <property type="project" value="UniProtKB-UniRule"/>
</dbReference>
<dbReference type="GO" id="GO:0044183">
    <property type="term" value="F:protein folding chaperone"/>
    <property type="evidence" value="ECO:0007669"/>
    <property type="project" value="TreeGrafter"/>
</dbReference>
<dbReference type="GO" id="GO:0043022">
    <property type="term" value="F:ribosome binding"/>
    <property type="evidence" value="ECO:0007669"/>
    <property type="project" value="TreeGrafter"/>
</dbReference>
<dbReference type="GO" id="GO:0051083">
    <property type="term" value="P:'de novo' cotranslational protein folding"/>
    <property type="evidence" value="ECO:0007669"/>
    <property type="project" value="TreeGrafter"/>
</dbReference>
<dbReference type="GO" id="GO:0051301">
    <property type="term" value="P:cell division"/>
    <property type="evidence" value="ECO:0007669"/>
    <property type="project" value="UniProtKB-KW"/>
</dbReference>
<dbReference type="GO" id="GO:0061077">
    <property type="term" value="P:chaperone-mediated protein folding"/>
    <property type="evidence" value="ECO:0007669"/>
    <property type="project" value="TreeGrafter"/>
</dbReference>
<dbReference type="GO" id="GO:0015031">
    <property type="term" value="P:protein transport"/>
    <property type="evidence" value="ECO:0007669"/>
    <property type="project" value="UniProtKB-UniRule"/>
</dbReference>
<dbReference type="GO" id="GO:0043335">
    <property type="term" value="P:protein unfolding"/>
    <property type="evidence" value="ECO:0007669"/>
    <property type="project" value="TreeGrafter"/>
</dbReference>
<dbReference type="FunFam" id="3.10.50.40:FF:000001">
    <property type="entry name" value="Trigger factor"/>
    <property type="match status" value="1"/>
</dbReference>
<dbReference type="Gene3D" id="3.10.50.40">
    <property type="match status" value="1"/>
</dbReference>
<dbReference type="Gene3D" id="3.30.70.1050">
    <property type="entry name" value="Trigger factor ribosome-binding domain"/>
    <property type="match status" value="1"/>
</dbReference>
<dbReference type="Gene3D" id="1.10.3120.10">
    <property type="entry name" value="Trigger factor, C-terminal domain"/>
    <property type="match status" value="1"/>
</dbReference>
<dbReference type="HAMAP" id="MF_00303">
    <property type="entry name" value="Trigger_factor_Tig"/>
    <property type="match status" value="1"/>
</dbReference>
<dbReference type="InterPro" id="IPR046357">
    <property type="entry name" value="PPIase_dom_sf"/>
</dbReference>
<dbReference type="InterPro" id="IPR001179">
    <property type="entry name" value="PPIase_FKBP_dom"/>
</dbReference>
<dbReference type="InterPro" id="IPR005215">
    <property type="entry name" value="Trig_fac"/>
</dbReference>
<dbReference type="InterPro" id="IPR008880">
    <property type="entry name" value="Trigger_fac_C"/>
</dbReference>
<dbReference type="InterPro" id="IPR037041">
    <property type="entry name" value="Trigger_fac_C_sf"/>
</dbReference>
<dbReference type="InterPro" id="IPR008881">
    <property type="entry name" value="Trigger_fac_ribosome-bd_bac"/>
</dbReference>
<dbReference type="InterPro" id="IPR036611">
    <property type="entry name" value="Trigger_fac_ribosome-bd_sf"/>
</dbReference>
<dbReference type="InterPro" id="IPR027304">
    <property type="entry name" value="Trigger_fact/SurA_dom_sf"/>
</dbReference>
<dbReference type="NCBIfam" id="TIGR00115">
    <property type="entry name" value="tig"/>
    <property type="match status" value="1"/>
</dbReference>
<dbReference type="PANTHER" id="PTHR30560">
    <property type="entry name" value="TRIGGER FACTOR CHAPERONE AND PEPTIDYL-PROLYL CIS/TRANS ISOMERASE"/>
    <property type="match status" value="1"/>
</dbReference>
<dbReference type="PANTHER" id="PTHR30560:SF3">
    <property type="entry name" value="TRIGGER FACTOR-LIKE PROTEIN TIG, CHLOROPLASTIC"/>
    <property type="match status" value="1"/>
</dbReference>
<dbReference type="Pfam" id="PF00254">
    <property type="entry name" value="FKBP_C"/>
    <property type="match status" value="1"/>
</dbReference>
<dbReference type="Pfam" id="PF05698">
    <property type="entry name" value="Trigger_C"/>
    <property type="match status" value="1"/>
</dbReference>
<dbReference type="Pfam" id="PF05697">
    <property type="entry name" value="Trigger_N"/>
    <property type="match status" value="1"/>
</dbReference>
<dbReference type="PIRSF" id="PIRSF003095">
    <property type="entry name" value="Trigger_factor"/>
    <property type="match status" value="1"/>
</dbReference>
<dbReference type="SUPFAM" id="SSF54534">
    <property type="entry name" value="FKBP-like"/>
    <property type="match status" value="1"/>
</dbReference>
<dbReference type="SUPFAM" id="SSF109998">
    <property type="entry name" value="Triger factor/SurA peptide-binding domain-like"/>
    <property type="match status" value="1"/>
</dbReference>
<dbReference type="SUPFAM" id="SSF102735">
    <property type="entry name" value="Trigger factor ribosome-binding domain"/>
    <property type="match status" value="1"/>
</dbReference>
<dbReference type="PROSITE" id="PS50059">
    <property type="entry name" value="FKBP_PPIASE"/>
    <property type="match status" value="1"/>
</dbReference>
<evidence type="ECO:0000255" key="1">
    <source>
        <dbReference type="HAMAP-Rule" id="MF_00303"/>
    </source>
</evidence>
<protein>
    <recommendedName>
        <fullName evidence="1">Trigger factor</fullName>
        <shortName evidence="1">TF</shortName>
        <ecNumber evidence="1">5.2.1.8</ecNumber>
    </recommendedName>
    <alternativeName>
        <fullName evidence="1">PPIase</fullName>
    </alternativeName>
</protein>
<proteinExistence type="inferred from homology"/>
<sequence>MANVVENLGKLERRVTISLPKDVVQKEIDARIQKLAKNVRMPGFRPGKVPLKMVAQQYAGQVEAEVLSDKIGQEFFTISRAENLRVAGQPSFAPKEDTQQESAYAFDATFEVYPEVKIGDLATAEVERSTTTIGDAEIDRTLDILRKQRVHFHARGEGGEHGDGGADTAAQNGDRVTVDFVGKIDGVAFQGGTAEDFVFVLGEGRMLPEFETAALGLKAGESREFDLKFPDDYHGKDVAGKTAQFTVTLKKVEWPHLPEIDADFAKSLGVEDGDLTKMRAEIKENLEREAKRRTQSIVKNQVMDALLKISELDVPKALIEQDQQRLVEMARQDLAQRGVPNAKDAPIPAEMFADQAERRVKLGLVLAELVKANGLEAKPEQIRAEVDEFAKSYEDPKEVVRWYYSNQQRLAEMEAFVVESNVVDFVLGKAKVTDKEVSFEALASATAQA</sequence>
<gene>
    <name evidence="1" type="primary">tig</name>
    <name type="ordered locus">BMASAVP1_A1958</name>
</gene>
<feature type="chain" id="PRO_1000022655" description="Trigger factor">
    <location>
        <begin position="1"/>
        <end position="449"/>
    </location>
</feature>
<feature type="domain" description="PPIase FKBP-type" evidence="1">
    <location>
        <begin position="173"/>
        <end position="258"/>
    </location>
</feature>
<keyword id="KW-0131">Cell cycle</keyword>
<keyword id="KW-0132">Cell division</keyword>
<keyword id="KW-0143">Chaperone</keyword>
<keyword id="KW-0963">Cytoplasm</keyword>
<keyword id="KW-0413">Isomerase</keyword>
<keyword id="KW-0697">Rotamase</keyword>
<comment type="function">
    <text evidence="1">Involved in protein export. Acts as a chaperone by maintaining the newly synthesized protein in an open conformation. Functions as a peptidyl-prolyl cis-trans isomerase.</text>
</comment>
<comment type="catalytic activity">
    <reaction evidence="1">
        <text>[protein]-peptidylproline (omega=180) = [protein]-peptidylproline (omega=0)</text>
        <dbReference type="Rhea" id="RHEA:16237"/>
        <dbReference type="Rhea" id="RHEA-COMP:10747"/>
        <dbReference type="Rhea" id="RHEA-COMP:10748"/>
        <dbReference type="ChEBI" id="CHEBI:83833"/>
        <dbReference type="ChEBI" id="CHEBI:83834"/>
        <dbReference type="EC" id="5.2.1.8"/>
    </reaction>
</comment>
<comment type="subcellular location">
    <subcellularLocation>
        <location>Cytoplasm</location>
    </subcellularLocation>
    <text evidence="1">About half TF is bound to the ribosome near the polypeptide exit tunnel while the other half is free in the cytoplasm.</text>
</comment>
<comment type="domain">
    <text evidence="1">Consists of 3 domains; the N-terminus binds the ribosome, the middle domain has PPIase activity, while the C-terminus has intrinsic chaperone activity on its own.</text>
</comment>
<comment type="similarity">
    <text evidence="1">Belongs to the FKBP-type PPIase family. Tig subfamily.</text>
</comment>
<name>TIG_BURMS</name>